<gene>
    <name type="primary">eif3a</name>
    <name type="synonym">eif3s10</name>
</gene>
<dbReference type="EMBL" id="BC059196">
    <property type="protein sequence ID" value="AAH59196.1"/>
    <property type="molecule type" value="mRNA"/>
</dbReference>
<dbReference type="EMBL" id="BC066670">
    <property type="protein sequence ID" value="AAH66670.1"/>
    <property type="molecule type" value="mRNA"/>
</dbReference>
<dbReference type="RefSeq" id="NP_956114.2">
    <property type="nucleotide sequence ID" value="NM_199820.2"/>
</dbReference>
<dbReference type="SMR" id="Q6PCR7"/>
<dbReference type="FunCoup" id="Q6PCR7">
    <property type="interactions" value="2998"/>
</dbReference>
<dbReference type="STRING" id="7955.ENSDARP00000102398"/>
<dbReference type="PaxDb" id="7955-ENSDARP00000102398"/>
<dbReference type="Ensembl" id="ENSDART00000111462">
    <property type="protein sequence ID" value="ENSDARP00000102398"/>
    <property type="gene ID" value="ENSDARG00000076815"/>
</dbReference>
<dbReference type="GeneID" id="327515"/>
<dbReference type="KEGG" id="dre:327515"/>
<dbReference type="AGR" id="ZFIN:ZDB-GENE-030131-5726"/>
<dbReference type="CTD" id="327515"/>
<dbReference type="ZFIN" id="ZDB-GENE-030131-5726">
    <property type="gene designation" value="eif3s10"/>
</dbReference>
<dbReference type="eggNOG" id="KOG2072">
    <property type="taxonomic scope" value="Eukaryota"/>
</dbReference>
<dbReference type="HOGENOM" id="CLU_002096_1_1_1"/>
<dbReference type="InParanoid" id="Q6PCR7"/>
<dbReference type="OMA" id="EHITNKR"/>
<dbReference type="OrthoDB" id="18884at2759"/>
<dbReference type="PhylomeDB" id="Q6PCR7"/>
<dbReference type="TreeFam" id="TF101522"/>
<dbReference type="Reactome" id="R-DRE-156827">
    <property type="pathway name" value="L13a-mediated translational silencing of Ceruloplasmin expression"/>
</dbReference>
<dbReference type="Reactome" id="R-DRE-72689">
    <property type="pathway name" value="Formation of a pool of free 40S subunits"/>
</dbReference>
<dbReference type="Reactome" id="R-DRE-72695">
    <property type="pathway name" value="Formation of the ternary complex, and subsequently, the 43S complex"/>
</dbReference>
<dbReference type="Reactome" id="R-DRE-72702">
    <property type="pathway name" value="Ribosomal scanning and start codon recognition"/>
</dbReference>
<dbReference type="PRO" id="PR:Q6PCR7"/>
<dbReference type="Proteomes" id="UP000000437">
    <property type="component" value="Chromosome 13"/>
</dbReference>
<dbReference type="Bgee" id="ENSDARG00000076815">
    <property type="expression patterns" value="Expressed in presomitic mesoderm and 28 other cell types or tissues"/>
</dbReference>
<dbReference type="GO" id="GO:0016282">
    <property type="term" value="C:eukaryotic 43S preinitiation complex"/>
    <property type="evidence" value="ECO:0007669"/>
    <property type="project" value="UniProtKB-UniRule"/>
</dbReference>
<dbReference type="GO" id="GO:0033290">
    <property type="term" value="C:eukaryotic 48S preinitiation complex"/>
    <property type="evidence" value="ECO:0007669"/>
    <property type="project" value="UniProtKB-UniRule"/>
</dbReference>
<dbReference type="GO" id="GO:0005852">
    <property type="term" value="C:eukaryotic translation initiation factor 3 complex"/>
    <property type="evidence" value="ECO:0000250"/>
    <property type="project" value="UniProtKB"/>
</dbReference>
<dbReference type="GO" id="GO:0071540">
    <property type="term" value="C:eukaryotic translation initiation factor 3 complex, eIF3e"/>
    <property type="evidence" value="ECO:0000318"/>
    <property type="project" value="GO_Central"/>
</dbReference>
<dbReference type="GO" id="GO:0071541">
    <property type="term" value="C:eukaryotic translation initiation factor 3 complex, eIF3m"/>
    <property type="evidence" value="ECO:0000318"/>
    <property type="project" value="GO_Central"/>
</dbReference>
<dbReference type="GO" id="GO:0043614">
    <property type="term" value="C:multi-eIF complex"/>
    <property type="evidence" value="ECO:0000318"/>
    <property type="project" value="GO_Central"/>
</dbReference>
<dbReference type="GO" id="GO:0003729">
    <property type="term" value="F:mRNA binding"/>
    <property type="evidence" value="ECO:0000318"/>
    <property type="project" value="GO_Central"/>
</dbReference>
<dbReference type="GO" id="GO:0003743">
    <property type="term" value="F:translation initiation factor activity"/>
    <property type="evidence" value="ECO:0007669"/>
    <property type="project" value="UniProtKB-UniRule"/>
</dbReference>
<dbReference type="GO" id="GO:0001732">
    <property type="term" value="P:formation of cytoplasmic translation initiation complex"/>
    <property type="evidence" value="ECO:0000250"/>
    <property type="project" value="UniProtKB"/>
</dbReference>
<dbReference type="GO" id="GO:0002188">
    <property type="term" value="P:translation reinitiation"/>
    <property type="evidence" value="ECO:0000318"/>
    <property type="project" value="GO_Central"/>
</dbReference>
<dbReference type="FunFam" id="1.25.40.860:FF:000001">
    <property type="entry name" value="Eukaryotic translation initiation factor 3 subunit A"/>
    <property type="match status" value="1"/>
</dbReference>
<dbReference type="FunFam" id="1.25.40.860:FF:000002">
    <property type="entry name" value="Eukaryotic translation initiation factor 3 subunit A"/>
    <property type="match status" value="1"/>
</dbReference>
<dbReference type="FunFam" id="4.10.860.10:FF:000001">
    <property type="entry name" value="Eukaryotic translation initiation factor 3 subunit A"/>
    <property type="match status" value="1"/>
</dbReference>
<dbReference type="Gene3D" id="1.25.40.860">
    <property type="match status" value="2"/>
</dbReference>
<dbReference type="Gene3D" id="4.10.860.10">
    <property type="entry name" value="UVR domain"/>
    <property type="match status" value="1"/>
</dbReference>
<dbReference type="HAMAP" id="MF_03000">
    <property type="entry name" value="eIF3a"/>
    <property type="match status" value="1"/>
</dbReference>
<dbReference type="InterPro" id="IPR027512">
    <property type="entry name" value="EIF3A"/>
</dbReference>
<dbReference type="InterPro" id="IPR054711">
    <property type="entry name" value="eIF3a_PCI_TPR-like"/>
</dbReference>
<dbReference type="InterPro" id="IPR000717">
    <property type="entry name" value="PCI_dom"/>
</dbReference>
<dbReference type="PANTHER" id="PTHR14005:SF0">
    <property type="entry name" value="EUKARYOTIC TRANSLATION INITIATION FACTOR 3 SUBUNIT A"/>
    <property type="match status" value="1"/>
</dbReference>
<dbReference type="PANTHER" id="PTHR14005">
    <property type="entry name" value="EUKARYOTIC TRANSLATION INITIATION FACTOR 3, THETA SUBUNIT"/>
    <property type="match status" value="1"/>
</dbReference>
<dbReference type="Pfam" id="PF22591">
    <property type="entry name" value="eIF3a_PCI_TPR-like"/>
    <property type="match status" value="1"/>
</dbReference>
<dbReference type="Pfam" id="PF01399">
    <property type="entry name" value="PCI"/>
    <property type="match status" value="1"/>
</dbReference>
<dbReference type="SMART" id="SM00088">
    <property type="entry name" value="PINT"/>
    <property type="match status" value="1"/>
</dbReference>
<dbReference type="PROSITE" id="PS50250">
    <property type="entry name" value="PCI"/>
    <property type="match status" value="1"/>
</dbReference>
<reference key="1">
    <citation type="submission" date="2004-03" db="EMBL/GenBank/DDBJ databases">
        <authorList>
            <consortium name="NIH - Zebrafish Gene Collection (ZGC) project"/>
        </authorList>
    </citation>
    <scope>NUCLEOTIDE SEQUENCE [LARGE SCALE MRNA]</scope>
    <source>
        <tissue>Embryo</tissue>
    </source>
</reference>
<evidence type="ECO:0000255" key="1">
    <source>
        <dbReference type="HAMAP-Rule" id="MF_03000"/>
    </source>
</evidence>
<evidence type="ECO:0000255" key="2">
    <source>
        <dbReference type="PROSITE-ProRule" id="PRU01185"/>
    </source>
</evidence>
<evidence type="ECO:0000256" key="3">
    <source>
        <dbReference type="SAM" id="MobiDB-lite"/>
    </source>
</evidence>
<evidence type="ECO:0000305" key="4"/>
<organism>
    <name type="scientific">Danio rerio</name>
    <name type="common">Zebrafish</name>
    <name type="synonym">Brachydanio rerio</name>
    <dbReference type="NCBI Taxonomy" id="7955"/>
    <lineage>
        <taxon>Eukaryota</taxon>
        <taxon>Metazoa</taxon>
        <taxon>Chordata</taxon>
        <taxon>Craniata</taxon>
        <taxon>Vertebrata</taxon>
        <taxon>Euteleostomi</taxon>
        <taxon>Actinopterygii</taxon>
        <taxon>Neopterygii</taxon>
        <taxon>Teleostei</taxon>
        <taxon>Ostariophysi</taxon>
        <taxon>Cypriniformes</taxon>
        <taxon>Danionidae</taxon>
        <taxon>Danioninae</taxon>
        <taxon>Danio</taxon>
    </lineage>
</organism>
<proteinExistence type="evidence at transcript level"/>
<accession>Q6PCR7</accession>
<accession>Q6NYB1</accession>
<keyword id="KW-0175">Coiled coil</keyword>
<keyword id="KW-0963">Cytoplasm</keyword>
<keyword id="KW-0396">Initiation factor</keyword>
<keyword id="KW-0648">Protein biosynthesis</keyword>
<keyword id="KW-1185">Reference proteome</keyword>
<keyword id="KW-0677">Repeat</keyword>
<keyword id="KW-0694">RNA-binding</keyword>
<feature type="initiator methionine" description="Removed" evidence="1">
    <location>
        <position position="1"/>
    </location>
</feature>
<feature type="chain" id="PRO_0000366328" description="Eukaryotic translation initiation factor 3 subunit A">
    <location>
        <begin position="2"/>
        <end position="1267"/>
    </location>
</feature>
<feature type="domain" description="PCI" evidence="2">
    <location>
        <begin position="315"/>
        <end position="498"/>
    </location>
</feature>
<feature type="repeat" description="1">
    <location>
        <begin position="956"/>
        <end position="965"/>
    </location>
</feature>
<feature type="repeat" description="2">
    <location>
        <begin position="966"/>
        <end position="975"/>
    </location>
</feature>
<feature type="repeat" description="3">
    <location>
        <begin position="976"/>
        <end position="985"/>
    </location>
</feature>
<feature type="repeat" description="4; truncated">
    <location>
        <begin position="986"/>
        <end position="994"/>
    </location>
</feature>
<feature type="repeat" description="5">
    <location>
        <begin position="995"/>
        <end position="1004"/>
    </location>
</feature>
<feature type="repeat" description="6">
    <location>
        <begin position="1005"/>
        <end position="1014"/>
    </location>
</feature>
<feature type="repeat" description="7; truncated">
    <location>
        <begin position="1015"/>
        <end position="1023"/>
    </location>
</feature>
<feature type="repeat" description="8">
    <location>
        <begin position="1024"/>
        <end position="1033"/>
    </location>
</feature>
<feature type="repeat" description="9">
    <location>
        <begin position="1034"/>
        <end position="1043"/>
    </location>
</feature>
<feature type="repeat" description="10; approximate">
    <location>
        <begin position="1044"/>
        <end position="1053"/>
    </location>
</feature>
<feature type="repeat" description="11">
    <location>
        <begin position="1054"/>
        <end position="1063"/>
    </location>
</feature>
<feature type="repeat" description="12; approximate">
    <location>
        <begin position="1064"/>
        <end position="1073"/>
    </location>
</feature>
<feature type="region of interest" description="Disordered" evidence="3">
    <location>
        <begin position="792"/>
        <end position="1267"/>
    </location>
</feature>
<feature type="region of interest" description="12 X 10 AA approximate tandem repeats of D-[DE]-[DE]-R-[GP]-[GPQT]-R-R-[GPS]-[ADFGIM]">
    <location>
        <begin position="956"/>
        <end position="1073"/>
    </location>
</feature>
<feature type="coiled-coil region" evidence="1">
    <location>
        <begin position="82"/>
        <end position="118"/>
    </location>
</feature>
<feature type="compositionally biased region" description="Basic and acidic residues" evidence="3">
    <location>
        <begin position="792"/>
        <end position="835"/>
    </location>
</feature>
<feature type="compositionally biased region" description="Basic and acidic residues" evidence="3">
    <location>
        <begin position="844"/>
        <end position="1086"/>
    </location>
</feature>
<feature type="compositionally biased region" description="Basic and acidic residues" evidence="3">
    <location>
        <begin position="1098"/>
        <end position="1147"/>
    </location>
</feature>
<feature type="compositionally biased region" description="Gly residues" evidence="3">
    <location>
        <begin position="1150"/>
        <end position="1159"/>
    </location>
</feature>
<feature type="compositionally biased region" description="Basic and acidic residues" evidence="3">
    <location>
        <begin position="1162"/>
        <end position="1256"/>
    </location>
</feature>
<feature type="sequence conflict" description="In Ref. 1; AAH66670." evidence="4" ref="1">
    <original>E</original>
    <variation>D</variation>
    <location>
        <position position="852"/>
    </location>
</feature>
<comment type="function">
    <text evidence="1">RNA-binding component of the eukaryotic translation initiation factor 3 (eIF-3) complex, which is involved in protein synthesis of a specialized repertoire of mRNAs and, together with other initiation factors, stimulates binding of mRNA and methionyl-tRNAi to the 40S ribosome. The eIF-3 complex specifically targets and initiates translation of a subset of mRNAs involved in cell proliferation.</text>
</comment>
<comment type="subunit">
    <text evidence="1">Component of the eukaryotic translation initiation factor 3 (eIF-3) complex, which is composed of 13 subunits: eif3a, eif3b, eif3c, eif3d, eif3e, eif3f, eif3g, eif3h, eif3i, eif3j, eif3k, eif3l and eif3m.</text>
</comment>
<comment type="subcellular location">
    <subcellularLocation>
        <location evidence="1">Cytoplasm</location>
    </subcellularLocation>
</comment>
<comment type="similarity">
    <text evidence="1">Belongs to the eIF-3 subunit A family.</text>
</comment>
<name>EIF3A_DANRE</name>
<sequence>MPAYFQRPENALKRANEFLEVGKKQPALDVLYDVIKSKKHRTWQKIHEPIMLKYLELCVDLRKSHLAKEGLYQYKNICQQVNIKSLEDVVRAYLKLAEEKTETAKEESQQMVLDIEDLDNIQTPESVLLSAVSGEDTQDRTDRLLLTPWVKFLWESYRQCLDLLRNNSKVERLYHDIAQQAFKFCLQYTRKAEFRKLCDNLRMHLGQIQRHHNQSTAINLNNPESQSMHLETRLVQLDSAISMELWQEAFKAVEDIHGLFALSKKPPKPQLMANYYNKVSTVFWKSGNALFHSCTLHRLYHLSREMRKNLTQEEMQRMSTRVLLATLSIPITPERTDIARLLDMDGIIVEKHRRLATLLGLQSPPTRQSLINDMVRFNLLQYVVPEVKELYNWLEVDFHPLKLCGRVTKVLNWVRDQAEKESDLQQYVPHLQNNTILRLLQQVAQIYQSIEFSRLASLVPFVDAFQLERSIVDAARHCDLQVRIDHSSRTLSFGSDLNYSTKEDSPVGPFLQNMPSEQIRNQLTAMSSSLAKAIQVIKPASILQDHEEQRQQAITAYLKNARKEHQRILARRQTIEERKERLESLNIQREKEELEQREAELQKVRKAEEERLRQEAKEREKERIMQEHEQIKKKTVRERLEQIKKTELGAKAFKDIDIEDLEELDPDFIMAKQVEQLEKEKKELQERLKNQEKKIDYFERAKRLEEIPLIKKAYEEQRIKDMELWELQEEERITNMKMEREKALEHKQRMSRMMEDKENFLSKIKAARSFIYEEKLKQFQERLVEERKKRLEERKKQRKEDRRKAFYHQKEEEAQRIREEQLKKEREERERLEQEQREEEEREYQERLRKLEEQERKQRARQQEIEERERRKEEERRAPEEKPNKEWAEREESGWRKRGEGESEWRRPVPDRDWRQEGREGREEPDREDRDLPFRRGGESARRGASDEKGLRRGCDDDRGPRRGGDDERPPRRGFDDDRGTRRGFDDDRGQRRGDDDRGPRRGMDDDRGPRRPIDDDRGPRRSDDDRGPRRGFDDDRGPRRGMDEPRGPRRGADDDWGPRRGGDDERGGRRGMDDSGPRRGEDSRPWKPLGRPGAGGWREREKAREESWGPPRDSGHDDDGGERDGDDQREGERFRERRSAREEGSAWRRGGGGGGGGEEQSSWRDSRREDFDREDRRERRDMRERRDDRERDIRGPQRDQDEGGSWRRGGEERREERKEERDAPPRPRERDRDSGEKSTWRSDKDKENPRRTKNETDDDGWTTVRR</sequence>
<protein>
    <recommendedName>
        <fullName evidence="1">Eukaryotic translation initiation factor 3 subunit A</fullName>
        <shortName evidence="1">eIF3a</shortName>
    </recommendedName>
    <alternativeName>
        <fullName evidence="1">Eukaryotic translation initiation factor 3 subunit 10</fullName>
    </alternativeName>
    <alternativeName>
        <fullName evidence="1">eIF-3-theta</fullName>
    </alternativeName>
</protein>